<accession>A5VNW5</accession>
<name>ATPF2_BRUO2</name>
<proteinExistence type="inferred from homology"/>
<reference key="1">
    <citation type="journal article" date="2009" name="PLoS ONE">
        <title>Genome degradation in Brucella ovis corresponds with narrowing of its host range and tissue tropism.</title>
        <authorList>
            <person name="Tsolis R.M."/>
            <person name="Seshadri R."/>
            <person name="Santos R.L."/>
            <person name="Sangari F.J."/>
            <person name="Lobo J.M."/>
            <person name="de Jong M.F."/>
            <person name="Ren Q."/>
            <person name="Myers G."/>
            <person name="Brinkac L.M."/>
            <person name="Nelson W.C."/>
            <person name="Deboy R.T."/>
            <person name="Angiuoli S."/>
            <person name="Khouri H."/>
            <person name="Dimitrov G."/>
            <person name="Robinson J.R."/>
            <person name="Mulligan S."/>
            <person name="Walker R.L."/>
            <person name="Elzer P.E."/>
            <person name="Hassan K.A."/>
            <person name="Paulsen I.T."/>
        </authorList>
    </citation>
    <scope>NUCLEOTIDE SEQUENCE [LARGE SCALE GENOMIC DNA]</scope>
    <source>
        <strain>ATCC 25840 / 63/290 / NCTC 10512</strain>
    </source>
</reference>
<evidence type="ECO:0000255" key="1">
    <source>
        <dbReference type="HAMAP-Rule" id="MF_01398"/>
    </source>
</evidence>
<keyword id="KW-0066">ATP synthesis</keyword>
<keyword id="KW-0997">Cell inner membrane</keyword>
<keyword id="KW-1003">Cell membrane</keyword>
<keyword id="KW-0138">CF(0)</keyword>
<keyword id="KW-0375">Hydrogen ion transport</keyword>
<keyword id="KW-0406">Ion transport</keyword>
<keyword id="KW-0472">Membrane</keyword>
<keyword id="KW-0812">Transmembrane</keyword>
<keyword id="KW-1133">Transmembrane helix</keyword>
<keyword id="KW-0813">Transport</keyword>
<gene>
    <name evidence="1" type="primary">atpF2</name>
    <name type="ordered locus">BOV_0397</name>
</gene>
<comment type="function">
    <text evidence="1">F(1)F(0) ATP synthase produces ATP from ADP in the presence of a proton or sodium gradient. F-type ATPases consist of two structural domains, F(1) containing the extramembraneous catalytic core and F(0) containing the membrane proton channel, linked together by a central stalk and a peripheral stalk. During catalysis, ATP synthesis in the catalytic domain of F(1) is coupled via a rotary mechanism of the central stalk subunits to proton translocation.</text>
</comment>
<comment type="function">
    <text evidence="1">Component of the F(0) channel, it forms part of the peripheral stalk, linking F(1) to F(0).</text>
</comment>
<comment type="subunit">
    <text evidence="1">F-type ATPases have 2 components, F(1) - the catalytic core - and F(0) - the membrane proton channel. F(1) has five subunits: alpha(3), beta(3), gamma(1), delta(1), epsilon(1). F(0) has three main subunits: a(1), b(2) and c(10-14). The alpha and beta chains form an alternating ring which encloses part of the gamma chain. F(1) is attached to F(0) by a central stalk formed by the gamma and epsilon chains, while a peripheral stalk is formed by the delta and b chains.</text>
</comment>
<comment type="subcellular location">
    <subcellularLocation>
        <location evidence="1">Cell inner membrane</location>
        <topology evidence="1">Single-pass membrane protein</topology>
    </subcellularLocation>
</comment>
<comment type="similarity">
    <text evidence="1">Belongs to the ATPase B chain family.</text>
</comment>
<sequence length="159" mass="17441">MDATFWAFIALVIFVAIVVYMKVPGMIGRTLDERADRIKKELEEARTLREEAQQLLAEYHRKCKEAEKEAGDIVASAEREAKALLEEAKRATEEYVARRNKLAEQKIATAETDAINAVRASAVDLAVAAAGSILAEKVDAKAAGNLFNDALAQVKSHLN</sequence>
<dbReference type="EMBL" id="CP000708">
    <property type="protein sequence ID" value="ABQ60781.1"/>
    <property type="molecule type" value="Genomic_DNA"/>
</dbReference>
<dbReference type="RefSeq" id="WP_005978305.1">
    <property type="nucleotide sequence ID" value="NC_009505.1"/>
</dbReference>
<dbReference type="SMR" id="A5VNW5"/>
<dbReference type="GeneID" id="45123878"/>
<dbReference type="KEGG" id="bov:BOV_0397"/>
<dbReference type="HOGENOM" id="CLU_079215_6_1_5"/>
<dbReference type="PhylomeDB" id="A5VNW5"/>
<dbReference type="Proteomes" id="UP000006383">
    <property type="component" value="Chromosome I"/>
</dbReference>
<dbReference type="GO" id="GO:0005886">
    <property type="term" value="C:plasma membrane"/>
    <property type="evidence" value="ECO:0007669"/>
    <property type="project" value="UniProtKB-SubCell"/>
</dbReference>
<dbReference type="GO" id="GO:0045259">
    <property type="term" value="C:proton-transporting ATP synthase complex"/>
    <property type="evidence" value="ECO:0007669"/>
    <property type="project" value="UniProtKB-KW"/>
</dbReference>
<dbReference type="GO" id="GO:0046933">
    <property type="term" value="F:proton-transporting ATP synthase activity, rotational mechanism"/>
    <property type="evidence" value="ECO:0007669"/>
    <property type="project" value="UniProtKB-UniRule"/>
</dbReference>
<dbReference type="GO" id="GO:0046961">
    <property type="term" value="F:proton-transporting ATPase activity, rotational mechanism"/>
    <property type="evidence" value="ECO:0007669"/>
    <property type="project" value="TreeGrafter"/>
</dbReference>
<dbReference type="CDD" id="cd06503">
    <property type="entry name" value="ATP-synt_Fo_b"/>
    <property type="match status" value="1"/>
</dbReference>
<dbReference type="HAMAP" id="MF_01398">
    <property type="entry name" value="ATP_synth_b_bprime"/>
    <property type="match status" value="1"/>
</dbReference>
<dbReference type="InterPro" id="IPR002146">
    <property type="entry name" value="ATP_synth_b/b'su_bac/chlpt"/>
</dbReference>
<dbReference type="InterPro" id="IPR005864">
    <property type="entry name" value="ATP_synth_F0_bsu_bac"/>
</dbReference>
<dbReference type="InterPro" id="IPR050059">
    <property type="entry name" value="ATP_synthase_B_chain"/>
</dbReference>
<dbReference type="NCBIfam" id="TIGR01144">
    <property type="entry name" value="ATP_synt_b"/>
    <property type="match status" value="1"/>
</dbReference>
<dbReference type="NCBIfam" id="NF006611">
    <property type="entry name" value="PRK09173.1"/>
    <property type="match status" value="1"/>
</dbReference>
<dbReference type="PANTHER" id="PTHR33445:SF1">
    <property type="entry name" value="ATP SYNTHASE SUBUNIT B"/>
    <property type="match status" value="1"/>
</dbReference>
<dbReference type="PANTHER" id="PTHR33445">
    <property type="entry name" value="ATP SYNTHASE SUBUNIT B', CHLOROPLASTIC"/>
    <property type="match status" value="1"/>
</dbReference>
<dbReference type="Pfam" id="PF00430">
    <property type="entry name" value="ATP-synt_B"/>
    <property type="match status" value="1"/>
</dbReference>
<feature type="chain" id="PRO_0000368373" description="ATP synthase subunit b 2">
    <location>
        <begin position="1"/>
        <end position="159"/>
    </location>
</feature>
<feature type="transmembrane region" description="Helical" evidence="1">
    <location>
        <begin position="1"/>
        <end position="21"/>
    </location>
</feature>
<organism>
    <name type="scientific">Brucella ovis (strain ATCC 25840 / 63/290 / NCTC 10512)</name>
    <dbReference type="NCBI Taxonomy" id="444178"/>
    <lineage>
        <taxon>Bacteria</taxon>
        <taxon>Pseudomonadati</taxon>
        <taxon>Pseudomonadota</taxon>
        <taxon>Alphaproteobacteria</taxon>
        <taxon>Hyphomicrobiales</taxon>
        <taxon>Brucellaceae</taxon>
        <taxon>Brucella/Ochrobactrum group</taxon>
        <taxon>Brucella</taxon>
    </lineage>
</organism>
<protein>
    <recommendedName>
        <fullName evidence="1">ATP synthase subunit b 2</fullName>
    </recommendedName>
    <alternativeName>
        <fullName evidence="1">ATP synthase F(0) sector subunit b 2</fullName>
    </alternativeName>
    <alternativeName>
        <fullName evidence="1">ATPase subunit I 2</fullName>
    </alternativeName>
    <alternativeName>
        <fullName evidence="1">F-type ATPase subunit b 2</fullName>
        <shortName evidence="1">F-ATPase subunit b 2</shortName>
    </alternativeName>
</protein>